<dbReference type="EC" id="6.1.1.19" evidence="1"/>
<dbReference type="EMBL" id="CP000254">
    <property type="protein sequence ID" value="ABD42529.1"/>
    <property type="molecule type" value="Genomic_DNA"/>
</dbReference>
<dbReference type="RefSeq" id="WP_011449783.1">
    <property type="nucleotide sequence ID" value="NC_007796.1"/>
</dbReference>
<dbReference type="SMR" id="Q2FS66"/>
<dbReference type="FunCoup" id="Q2FS66">
    <property type="interactions" value="195"/>
</dbReference>
<dbReference type="STRING" id="323259.Mhun_2837"/>
<dbReference type="EnsemblBacteria" id="ABD42529">
    <property type="protein sequence ID" value="ABD42529"/>
    <property type="gene ID" value="Mhun_2837"/>
</dbReference>
<dbReference type="GeneID" id="3923106"/>
<dbReference type="KEGG" id="mhu:Mhun_2837"/>
<dbReference type="eggNOG" id="arCOG00487">
    <property type="taxonomic scope" value="Archaea"/>
</dbReference>
<dbReference type="HOGENOM" id="CLU_006406_6_1_2"/>
<dbReference type="InParanoid" id="Q2FS66"/>
<dbReference type="OrthoDB" id="372102at2157"/>
<dbReference type="Proteomes" id="UP000001941">
    <property type="component" value="Chromosome"/>
</dbReference>
<dbReference type="GO" id="GO:0005737">
    <property type="term" value="C:cytoplasm"/>
    <property type="evidence" value="ECO:0007669"/>
    <property type="project" value="UniProtKB-SubCell"/>
</dbReference>
<dbReference type="GO" id="GO:0004814">
    <property type="term" value="F:arginine-tRNA ligase activity"/>
    <property type="evidence" value="ECO:0007669"/>
    <property type="project" value="UniProtKB-UniRule"/>
</dbReference>
<dbReference type="GO" id="GO:0005524">
    <property type="term" value="F:ATP binding"/>
    <property type="evidence" value="ECO:0007669"/>
    <property type="project" value="UniProtKB-UniRule"/>
</dbReference>
<dbReference type="GO" id="GO:0006420">
    <property type="term" value="P:arginyl-tRNA aminoacylation"/>
    <property type="evidence" value="ECO:0007669"/>
    <property type="project" value="UniProtKB-UniRule"/>
</dbReference>
<dbReference type="CDD" id="cd00671">
    <property type="entry name" value="ArgRS_core"/>
    <property type="match status" value="1"/>
</dbReference>
<dbReference type="Gene3D" id="3.30.1360.70">
    <property type="entry name" value="Arginyl tRNA synthetase N-terminal domain"/>
    <property type="match status" value="1"/>
</dbReference>
<dbReference type="Gene3D" id="3.40.50.620">
    <property type="entry name" value="HUPs"/>
    <property type="match status" value="1"/>
</dbReference>
<dbReference type="Gene3D" id="1.10.730.10">
    <property type="entry name" value="Isoleucyl-tRNA Synthetase, Domain 1"/>
    <property type="match status" value="1"/>
</dbReference>
<dbReference type="HAMAP" id="MF_00123">
    <property type="entry name" value="Arg_tRNA_synth"/>
    <property type="match status" value="1"/>
</dbReference>
<dbReference type="InterPro" id="IPR001412">
    <property type="entry name" value="aa-tRNA-synth_I_CS"/>
</dbReference>
<dbReference type="InterPro" id="IPR001278">
    <property type="entry name" value="Arg-tRNA-ligase"/>
</dbReference>
<dbReference type="InterPro" id="IPR005148">
    <property type="entry name" value="Arg-tRNA-synth_N"/>
</dbReference>
<dbReference type="InterPro" id="IPR036695">
    <property type="entry name" value="Arg-tRNA-synth_N_sf"/>
</dbReference>
<dbReference type="InterPro" id="IPR035684">
    <property type="entry name" value="ArgRS_core"/>
</dbReference>
<dbReference type="InterPro" id="IPR008909">
    <property type="entry name" value="DALR_anticod-bd"/>
</dbReference>
<dbReference type="InterPro" id="IPR014729">
    <property type="entry name" value="Rossmann-like_a/b/a_fold"/>
</dbReference>
<dbReference type="InterPro" id="IPR009080">
    <property type="entry name" value="tRNAsynth_Ia_anticodon-bd"/>
</dbReference>
<dbReference type="NCBIfam" id="TIGR00456">
    <property type="entry name" value="argS"/>
    <property type="match status" value="1"/>
</dbReference>
<dbReference type="PANTHER" id="PTHR11956:SF5">
    <property type="entry name" value="ARGININE--TRNA LIGASE, CYTOPLASMIC"/>
    <property type="match status" value="1"/>
</dbReference>
<dbReference type="PANTHER" id="PTHR11956">
    <property type="entry name" value="ARGINYL-TRNA SYNTHETASE"/>
    <property type="match status" value="1"/>
</dbReference>
<dbReference type="Pfam" id="PF03485">
    <property type="entry name" value="Arg_tRNA_synt_N"/>
    <property type="match status" value="1"/>
</dbReference>
<dbReference type="Pfam" id="PF05746">
    <property type="entry name" value="DALR_1"/>
    <property type="match status" value="1"/>
</dbReference>
<dbReference type="Pfam" id="PF00750">
    <property type="entry name" value="tRNA-synt_1d"/>
    <property type="match status" value="1"/>
</dbReference>
<dbReference type="PRINTS" id="PR01038">
    <property type="entry name" value="TRNASYNTHARG"/>
</dbReference>
<dbReference type="SMART" id="SM01016">
    <property type="entry name" value="Arg_tRNA_synt_N"/>
    <property type="match status" value="1"/>
</dbReference>
<dbReference type="SMART" id="SM00836">
    <property type="entry name" value="DALR_1"/>
    <property type="match status" value="1"/>
</dbReference>
<dbReference type="SUPFAM" id="SSF47323">
    <property type="entry name" value="Anticodon-binding domain of a subclass of class I aminoacyl-tRNA synthetases"/>
    <property type="match status" value="1"/>
</dbReference>
<dbReference type="SUPFAM" id="SSF55190">
    <property type="entry name" value="Arginyl-tRNA synthetase (ArgRS), N-terminal 'additional' domain"/>
    <property type="match status" value="1"/>
</dbReference>
<dbReference type="SUPFAM" id="SSF52374">
    <property type="entry name" value="Nucleotidylyl transferase"/>
    <property type="match status" value="1"/>
</dbReference>
<dbReference type="PROSITE" id="PS00178">
    <property type="entry name" value="AA_TRNA_LIGASE_I"/>
    <property type="match status" value="1"/>
</dbReference>
<feature type="chain" id="PRO_0000242132" description="Arginine--tRNA ligase">
    <location>
        <begin position="1"/>
        <end position="555"/>
    </location>
</feature>
<feature type="short sequence motif" description="'HIGH' region">
    <location>
        <begin position="117"/>
        <end position="127"/>
    </location>
</feature>
<evidence type="ECO:0000255" key="1">
    <source>
        <dbReference type="HAMAP-Rule" id="MF_00123"/>
    </source>
</evidence>
<organism>
    <name type="scientific">Methanospirillum hungatei JF-1 (strain ATCC 27890 / DSM 864 / NBRC 100397 / JF-1)</name>
    <dbReference type="NCBI Taxonomy" id="323259"/>
    <lineage>
        <taxon>Archaea</taxon>
        <taxon>Methanobacteriati</taxon>
        <taxon>Methanobacteriota</taxon>
        <taxon>Stenosarchaea group</taxon>
        <taxon>Methanomicrobia</taxon>
        <taxon>Methanomicrobiales</taxon>
        <taxon>Methanospirillaceae</taxon>
        <taxon>Methanospirillum</taxon>
    </lineage>
</organism>
<sequence length="555" mass="61994">MYRTTCDAIAAILRQHTGKEDVMLTDGGDHADVASTIAFSLAKELRKAPAIIAQEIAGAISDQVMAETGAETRAVGPYVNFIFGAEYCMNVLEQAVREGYGKGQEKSERVVLEHTSANPNGPLHVGHIRNTIIGDTLARCFRKAGYPLEVQYYVNDMGRQIAIVAWGIATQGADIHAEGKGDHLIADVYIEANRHLEKEPALNAEIDRLMQLVESGDPDTISQFKIPVKRCLDGFKDTLAAMHVKHDRFIYESDFIRNGDTAKVLSRISHLPEARIEETLSLDLSAFGFEKNYILRRSDGTSVYAARDIAFHIWKGHNFDRVIDVLGADHKLIGTQLQATLEILGERVPEIVFFEFVSLPEGSMSTRKGKFISADELIAETERRAMEEVTARRSELSEEERKKIAHSVAISAIRYDIIRTIPEKSTVFDWKEALDFEKQSGPYIQYAHARACSILEKAESYTPCFEAEGEGEIALTKQIALFPKVITEVVTELKPHLLAIYARELADIFNSFYHAEPVLRAEGKIRDRRLTLVDATRNTLKEALETLGIDALRAM</sequence>
<keyword id="KW-0030">Aminoacyl-tRNA synthetase</keyword>
<keyword id="KW-0067">ATP-binding</keyword>
<keyword id="KW-0963">Cytoplasm</keyword>
<keyword id="KW-0436">Ligase</keyword>
<keyword id="KW-0547">Nucleotide-binding</keyword>
<keyword id="KW-0648">Protein biosynthesis</keyword>
<keyword id="KW-1185">Reference proteome</keyword>
<proteinExistence type="inferred from homology"/>
<name>SYR_METHJ</name>
<gene>
    <name evidence="1" type="primary">argS</name>
    <name type="ordered locus">Mhun_2837</name>
</gene>
<protein>
    <recommendedName>
        <fullName evidence="1">Arginine--tRNA ligase</fullName>
        <ecNumber evidence="1">6.1.1.19</ecNumber>
    </recommendedName>
    <alternativeName>
        <fullName evidence="1">Arginyl-tRNA synthetase</fullName>
        <shortName evidence="1">ArgRS</shortName>
    </alternativeName>
</protein>
<reference key="1">
    <citation type="journal article" date="2016" name="Stand. Genomic Sci.">
        <title>Complete genome sequence of Methanospirillum hungatei type strain JF1.</title>
        <authorList>
            <person name="Gunsalus R.P."/>
            <person name="Cook L.E."/>
            <person name="Crable B."/>
            <person name="Rohlin L."/>
            <person name="McDonald E."/>
            <person name="Mouttaki H."/>
            <person name="Sieber J.R."/>
            <person name="Poweleit N."/>
            <person name="Zhou H."/>
            <person name="Lapidus A.L."/>
            <person name="Daligault H.E."/>
            <person name="Land M."/>
            <person name="Gilna P."/>
            <person name="Ivanova N."/>
            <person name="Kyrpides N."/>
            <person name="Culley D.E."/>
            <person name="McInerney M.J."/>
        </authorList>
    </citation>
    <scope>NUCLEOTIDE SEQUENCE [LARGE SCALE GENOMIC DNA]</scope>
    <source>
        <strain>ATCC 27890 / DSM 864 / NBRC 100397 / JF-1</strain>
    </source>
</reference>
<comment type="catalytic activity">
    <reaction evidence="1">
        <text>tRNA(Arg) + L-arginine + ATP = L-arginyl-tRNA(Arg) + AMP + diphosphate</text>
        <dbReference type="Rhea" id="RHEA:20301"/>
        <dbReference type="Rhea" id="RHEA-COMP:9658"/>
        <dbReference type="Rhea" id="RHEA-COMP:9673"/>
        <dbReference type="ChEBI" id="CHEBI:30616"/>
        <dbReference type="ChEBI" id="CHEBI:32682"/>
        <dbReference type="ChEBI" id="CHEBI:33019"/>
        <dbReference type="ChEBI" id="CHEBI:78442"/>
        <dbReference type="ChEBI" id="CHEBI:78513"/>
        <dbReference type="ChEBI" id="CHEBI:456215"/>
        <dbReference type="EC" id="6.1.1.19"/>
    </reaction>
</comment>
<comment type="subcellular location">
    <subcellularLocation>
        <location evidence="1">Cytoplasm</location>
    </subcellularLocation>
</comment>
<comment type="similarity">
    <text evidence="1">Belongs to the class-I aminoacyl-tRNA synthetase family.</text>
</comment>
<accession>Q2FS66</accession>